<comment type="function">
    <text>May play a role in ulcer formation. Proteolytic digestion of gastric mucus has been suggested as an important mechanism by which its pathogenicity is at least partly exerted.</text>
</comment>
<comment type="cofactor">
    <cofactor evidence="1">
        <name>Zn(2+)</name>
        <dbReference type="ChEBI" id="CHEBI:29105"/>
    </cofactor>
    <text evidence="1">Binds 1 zinc ion.</text>
</comment>
<comment type="subcellular location">
    <subcellularLocation>
        <location evidence="3">Secreted</location>
    </subcellularLocation>
</comment>
<comment type="similarity">
    <text evidence="3">Belongs to the peptidase M4 family.</text>
</comment>
<protein>
    <recommendedName>
        <fullName>Zinc metalloprotease</fullName>
        <ecNumber>3.4.24.-</ecNumber>
    </recommendedName>
</protein>
<proteinExistence type="inferred from homology"/>
<gene>
    <name type="primary">hap</name>
</gene>
<organism>
    <name type="scientific">Helicobacter pylori</name>
    <name type="common">Campylobacter pylori</name>
    <dbReference type="NCBI Taxonomy" id="210"/>
    <lineage>
        <taxon>Bacteria</taxon>
        <taxon>Pseudomonadati</taxon>
        <taxon>Campylobacterota</taxon>
        <taxon>Epsilonproteobacteria</taxon>
        <taxon>Campylobacterales</taxon>
        <taxon>Helicobacteraceae</taxon>
        <taxon>Helicobacter</taxon>
    </lineage>
</organism>
<keyword id="KW-0106">Calcium</keyword>
<keyword id="KW-0378">Hydrolase</keyword>
<keyword id="KW-0482">Metalloprotease</keyword>
<keyword id="KW-0645">Protease</keyword>
<keyword id="KW-0964">Secreted</keyword>
<keyword id="KW-0862">Zinc</keyword>
<evidence type="ECO:0000250" key="1"/>
<evidence type="ECO:0000255" key="2">
    <source>
        <dbReference type="PROSITE-ProRule" id="PRU10095"/>
    </source>
</evidence>
<evidence type="ECO:0000305" key="3"/>
<reference key="1">
    <citation type="journal article" date="1994" name="Mol. Microbiol.">
        <title>The human gastric pathogen Helicobacter pylori has a gene encoding an enzyme first classified as a mucinase in Vibrio cholerae.</title>
        <authorList>
            <person name="Smith A.W."/>
            <person name="Chahal B."/>
            <person name="French G.L."/>
        </authorList>
    </citation>
    <scope>NUCLEOTIDE SEQUENCE [GENOMIC DNA]</scope>
    <source>
        <strain>DSM 4867 / CCUG 17874 / NCTC 11638</strain>
    </source>
</reference>
<sequence>NSGLVYRDMSGGINEAFSDIAGEAAEYFMRGNVDWIVGADIFKSSGGLRYFDQPSRDGRSIDHASQYYSGIDVHSSGVFNRAFYLLANKSGWNVRKGFEVFAVANQLYWTPNSTFDQGGCGVVKAAQDLNYNTADVVAAFNTVGVNASCGTTPPPVGKVLEKGKPITGLSGSRGGEDFYTFTVTNSGSVVVSISGGTGDADLYVKAGSKPTTSSWDCRPYRSGNAEQCSISAVVGTTYHVMLRGYSNYSGVTLRLD</sequence>
<name>HAP_HELPX</name>
<feature type="chain" id="PRO_0000078175" description="Zinc metalloprotease">
    <location>
        <begin position="1" status="less than"/>
        <end position="256"/>
    </location>
</feature>
<feature type="active site" description="Proton donor" evidence="2">
    <location>
        <position position="74"/>
    </location>
</feature>
<feature type="non-terminal residue">
    <location>
        <position position="1"/>
    </location>
</feature>
<accession>Q48259</accession>
<dbReference type="EC" id="3.4.24.-"/>
<dbReference type="EMBL" id="Z27239">
    <property type="protein sequence ID" value="CAA81753.1"/>
    <property type="molecule type" value="Genomic_DNA"/>
</dbReference>
<dbReference type="PIR" id="S54406">
    <property type="entry name" value="S54406"/>
</dbReference>
<dbReference type="SMR" id="Q48259"/>
<dbReference type="MEROPS" id="M04.003"/>
<dbReference type="GO" id="GO:0005576">
    <property type="term" value="C:extracellular region"/>
    <property type="evidence" value="ECO:0007669"/>
    <property type="project" value="UniProtKB-SubCell"/>
</dbReference>
<dbReference type="GO" id="GO:0004222">
    <property type="term" value="F:metalloendopeptidase activity"/>
    <property type="evidence" value="ECO:0007669"/>
    <property type="project" value="InterPro"/>
</dbReference>
<dbReference type="GO" id="GO:0006508">
    <property type="term" value="P:proteolysis"/>
    <property type="evidence" value="ECO:0007669"/>
    <property type="project" value="UniProtKB-KW"/>
</dbReference>
<dbReference type="FunFam" id="2.60.120.380:FF:000013">
    <property type="entry name" value="Alkaline serine protease"/>
    <property type="match status" value="1"/>
</dbReference>
<dbReference type="Gene3D" id="2.60.120.380">
    <property type="match status" value="1"/>
</dbReference>
<dbReference type="Gene3D" id="1.10.390.10">
    <property type="entry name" value="Neutral Protease Domain 2"/>
    <property type="match status" value="1"/>
</dbReference>
<dbReference type="InterPro" id="IPR007280">
    <property type="entry name" value="Peptidase_C_arc/bac"/>
</dbReference>
<dbReference type="InterPro" id="IPR023612">
    <property type="entry name" value="Peptidase_M4"/>
</dbReference>
<dbReference type="InterPro" id="IPR027268">
    <property type="entry name" value="Peptidase_M4/M1_CTD_sf"/>
</dbReference>
<dbReference type="InterPro" id="IPR001570">
    <property type="entry name" value="Peptidase_M4_C_domain"/>
</dbReference>
<dbReference type="InterPro" id="IPR050728">
    <property type="entry name" value="Zinc_Metalloprotease_M4"/>
</dbReference>
<dbReference type="PANTHER" id="PTHR33794">
    <property type="entry name" value="BACILLOLYSIN"/>
    <property type="match status" value="1"/>
</dbReference>
<dbReference type="PANTHER" id="PTHR33794:SF1">
    <property type="entry name" value="BACILLOLYSIN"/>
    <property type="match status" value="1"/>
</dbReference>
<dbReference type="Pfam" id="PF02868">
    <property type="entry name" value="Peptidase_M4_C"/>
    <property type="match status" value="1"/>
</dbReference>
<dbReference type="Pfam" id="PF04151">
    <property type="entry name" value="PPC"/>
    <property type="match status" value="1"/>
</dbReference>
<dbReference type="PRINTS" id="PR00730">
    <property type="entry name" value="THERMOLYSIN"/>
</dbReference>
<dbReference type="SUPFAM" id="SSF89260">
    <property type="entry name" value="Collagen-binding domain"/>
    <property type="match status" value="1"/>
</dbReference>
<dbReference type="SUPFAM" id="SSF55486">
    <property type="entry name" value="Metalloproteases ('zincins'), catalytic domain"/>
    <property type="match status" value="1"/>
</dbReference>